<proteinExistence type="inferred from homology"/>
<protein>
    <recommendedName>
        <fullName>Superoxide dismutase [Mn/Fe]</fullName>
        <ecNumber evidence="1">1.15.1.1</ecNumber>
    </recommendedName>
</protein>
<name>SODF_RICTY</name>
<accession>Q68WK0</accession>
<sequence length="209" mass="24737">MTYCRKANQTSYPFILPDLPYAKESFKPHFTCETFDYHHGKHHNSYVQNLNNLLKDREELQKKDLEGIIKWSSKNSEVTVFNNASQIWNHTFFWYSIKPHGGGKPSGKVFEQISQDFGSFEQFCEQFKQEALGQFGSGWVWVVYNNNKLQIIKTSNADTPIVNLMKPILVCDVWEHAYYIDYRNKRSDYIDIFISHMINWKFVEDNLIQ</sequence>
<evidence type="ECO:0000250" key="1">
    <source>
        <dbReference type="UniProtKB" id="P80293"/>
    </source>
</evidence>
<evidence type="ECO:0000305" key="2"/>
<comment type="function">
    <text evidence="1">Destroys superoxide anion radicals which are normally produced within the cells and which are toxic to biological systems. Catalyzes the dismutation of superoxide anion radicals into O2 and H2O2 by successive reduction and oxidation of the transition metal ion at the active site.</text>
</comment>
<comment type="catalytic activity">
    <reaction evidence="1">
        <text>2 superoxide + 2 H(+) = H2O2 + O2</text>
        <dbReference type="Rhea" id="RHEA:20696"/>
        <dbReference type="ChEBI" id="CHEBI:15378"/>
        <dbReference type="ChEBI" id="CHEBI:15379"/>
        <dbReference type="ChEBI" id="CHEBI:16240"/>
        <dbReference type="ChEBI" id="CHEBI:18421"/>
        <dbReference type="EC" id="1.15.1.1"/>
    </reaction>
    <physiologicalReaction direction="left-to-right" evidence="1">
        <dbReference type="Rhea" id="RHEA:20697"/>
    </physiologicalReaction>
</comment>
<comment type="cofactor">
    <cofactor evidence="1">
        <name>Mn(2+)</name>
        <dbReference type="ChEBI" id="CHEBI:29035"/>
    </cofactor>
    <cofactor evidence="1">
        <name>Fe(3+)</name>
        <dbReference type="ChEBI" id="CHEBI:29034"/>
    </cofactor>
    <text evidence="1">Binds 1 Mn(2+) or Fe(3+) ion per subunit.</text>
</comment>
<comment type="similarity">
    <text evidence="2">Belongs to the iron/manganese superoxide dismutase family.</text>
</comment>
<organism>
    <name type="scientific">Rickettsia typhi (strain ATCC VR-144 / Wilmington)</name>
    <dbReference type="NCBI Taxonomy" id="257363"/>
    <lineage>
        <taxon>Bacteria</taxon>
        <taxon>Pseudomonadati</taxon>
        <taxon>Pseudomonadota</taxon>
        <taxon>Alphaproteobacteria</taxon>
        <taxon>Rickettsiales</taxon>
        <taxon>Rickettsiaceae</taxon>
        <taxon>Rickettsieae</taxon>
        <taxon>Rickettsia</taxon>
        <taxon>typhus group</taxon>
    </lineage>
</organism>
<gene>
    <name type="primary">sodB</name>
    <name type="ordered locus">RT0523</name>
</gene>
<keyword id="KW-0408">Iron</keyword>
<keyword id="KW-0464">Manganese</keyword>
<keyword id="KW-0479">Metal-binding</keyword>
<keyword id="KW-0560">Oxidoreductase</keyword>
<feature type="chain" id="PRO_0000286503" description="Superoxide dismutase [Mn/Fe]">
    <location>
        <begin position="1"/>
        <end position="209"/>
    </location>
</feature>
<feature type="binding site" evidence="1">
    <location>
        <position position="38"/>
    </location>
    <ligand>
        <name>Fe(3+)</name>
        <dbReference type="ChEBI" id="CHEBI:29034"/>
    </ligand>
</feature>
<feature type="binding site" evidence="1">
    <location>
        <position position="38"/>
    </location>
    <ligand>
        <name>Mn(2+)</name>
        <dbReference type="ChEBI" id="CHEBI:29035"/>
    </ligand>
</feature>
<feature type="binding site" evidence="1">
    <location>
        <position position="90"/>
    </location>
    <ligand>
        <name>Fe(3+)</name>
        <dbReference type="ChEBI" id="CHEBI:29034"/>
    </ligand>
</feature>
<feature type="binding site" evidence="1">
    <location>
        <position position="90"/>
    </location>
    <ligand>
        <name>Mn(2+)</name>
        <dbReference type="ChEBI" id="CHEBI:29035"/>
    </ligand>
</feature>
<feature type="binding site" evidence="1">
    <location>
        <position position="172"/>
    </location>
    <ligand>
        <name>Fe(3+)</name>
        <dbReference type="ChEBI" id="CHEBI:29034"/>
    </ligand>
</feature>
<feature type="binding site" evidence="1">
    <location>
        <position position="172"/>
    </location>
    <ligand>
        <name>Mn(2+)</name>
        <dbReference type="ChEBI" id="CHEBI:29035"/>
    </ligand>
</feature>
<feature type="binding site" evidence="1">
    <location>
        <position position="176"/>
    </location>
    <ligand>
        <name>Fe(3+)</name>
        <dbReference type="ChEBI" id="CHEBI:29034"/>
    </ligand>
</feature>
<feature type="binding site" evidence="1">
    <location>
        <position position="176"/>
    </location>
    <ligand>
        <name>Mn(2+)</name>
        <dbReference type="ChEBI" id="CHEBI:29035"/>
    </ligand>
</feature>
<reference key="1">
    <citation type="journal article" date="2004" name="J. Bacteriol.">
        <title>Complete genome sequence of Rickettsia typhi and comparison with sequences of other Rickettsiae.</title>
        <authorList>
            <person name="McLeod M.P."/>
            <person name="Qin X."/>
            <person name="Karpathy S.E."/>
            <person name="Gioia J."/>
            <person name="Highlander S.K."/>
            <person name="Fox G.E."/>
            <person name="McNeill T.Z."/>
            <person name="Jiang H."/>
            <person name="Muzny D."/>
            <person name="Jacob L.S."/>
            <person name="Hawes A.C."/>
            <person name="Sodergren E."/>
            <person name="Gill R."/>
            <person name="Hume J."/>
            <person name="Morgan M."/>
            <person name="Fan G."/>
            <person name="Amin A.G."/>
            <person name="Gibbs R.A."/>
            <person name="Hong C."/>
            <person name="Yu X.-J."/>
            <person name="Walker D.H."/>
            <person name="Weinstock G.M."/>
        </authorList>
    </citation>
    <scope>NUCLEOTIDE SEQUENCE [LARGE SCALE GENOMIC DNA]</scope>
    <source>
        <strain>ATCC VR-144 / Wilmington</strain>
    </source>
</reference>
<dbReference type="EC" id="1.15.1.1" evidence="1"/>
<dbReference type="EMBL" id="AE017197">
    <property type="protein sequence ID" value="AAU03992.1"/>
    <property type="molecule type" value="Genomic_DNA"/>
</dbReference>
<dbReference type="RefSeq" id="WP_011190973.1">
    <property type="nucleotide sequence ID" value="NC_006142.1"/>
</dbReference>
<dbReference type="SMR" id="Q68WK0"/>
<dbReference type="KEGG" id="rty:RT0523"/>
<dbReference type="eggNOG" id="COG0605">
    <property type="taxonomic scope" value="Bacteria"/>
</dbReference>
<dbReference type="HOGENOM" id="CLU_031625_0_0_5"/>
<dbReference type="OrthoDB" id="9803125at2"/>
<dbReference type="Proteomes" id="UP000000604">
    <property type="component" value="Chromosome"/>
</dbReference>
<dbReference type="GO" id="GO:0046872">
    <property type="term" value="F:metal ion binding"/>
    <property type="evidence" value="ECO:0007669"/>
    <property type="project" value="UniProtKB-KW"/>
</dbReference>
<dbReference type="GO" id="GO:0004784">
    <property type="term" value="F:superoxide dismutase activity"/>
    <property type="evidence" value="ECO:0007669"/>
    <property type="project" value="UniProtKB-EC"/>
</dbReference>
<dbReference type="Gene3D" id="1.10.287.990">
    <property type="entry name" value="Fe,Mn superoxide dismutase (SOD) domain"/>
    <property type="match status" value="1"/>
</dbReference>
<dbReference type="Gene3D" id="3.55.40.20">
    <property type="entry name" value="Iron/manganese superoxide dismutase, C-terminal domain"/>
    <property type="match status" value="1"/>
</dbReference>
<dbReference type="InterPro" id="IPR001189">
    <property type="entry name" value="Mn/Fe_SOD"/>
</dbReference>
<dbReference type="InterPro" id="IPR019833">
    <property type="entry name" value="Mn/Fe_SOD_BS"/>
</dbReference>
<dbReference type="InterPro" id="IPR019832">
    <property type="entry name" value="Mn/Fe_SOD_C"/>
</dbReference>
<dbReference type="InterPro" id="IPR019831">
    <property type="entry name" value="Mn/Fe_SOD_N"/>
</dbReference>
<dbReference type="InterPro" id="IPR036324">
    <property type="entry name" value="Mn/Fe_SOD_N_sf"/>
</dbReference>
<dbReference type="InterPro" id="IPR036314">
    <property type="entry name" value="SOD_C_sf"/>
</dbReference>
<dbReference type="PANTHER" id="PTHR42769">
    <property type="entry name" value="SUPEROXIDE DISMUTASE"/>
    <property type="match status" value="1"/>
</dbReference>
<dbReference type="PANTHER" id="PTHR42769:SF3">
    <property type="entry name" value="SUPEROXIDE DISMUTASE [FE] 2, CHLOROPLASTIC"/>
    <property type="match status" value="1"/>
</dbReference>
<dbReference type="Pfam" id="PF02777">
    <property type="entry name" value="Sod_Fe_C"/>
    <property type="match status" value="1"/>
</dbReference>
<dbReference type="Pfam" id="PF00081">
    <property type="entry name" value="Sod_Fe_N"/>
    <property type="match status" value="1"/>
</dbReference>
<dbReference type="PIRSF" id="PIRSF000349">
    <property type="entry name" value="SODismutase"/>
    <property type="match status" value="1"/>
</dbReference>
<dbReference type="PRINTS" id="PR01703">
    <property type="entry name" value="MNSODISMTASE"/>
</dbReference>
<dbReference type="SUPFAM" id="SSF54719">
    <property type="entry name" value="Fe,Mn superoxide dismutase (SOD), C-terminal domain"/>
    <property type="match status" value="1"/>
</dbReference>
<dbReference type="SUPFAM" id="SSF46609">
    <property type="entry name" value="Fe,Mn superoxide dismutase (SOD), N-terminal domain"/>
    <property type="match status" value="1"/>
</dbReference>
<dbReference type="PROSITE" id="PS00088">
    <property type="entry name" value="SOD_MN"/>
    <property type="match status" value="1"/>
</dbReference>